<feature type="chain" id="PRO_0000372204" description="Putative antiporter subunit mnhF2">
    <location>
        <begin position="1"/>
        <end position="100"/>
    </location>
</feature>
<feature type="transmembrane region" description="Helical" evidence="2">
    <location>
        <begin position="5"/>
        <end position="25"/>
    </location>
</feature>
<feature type="transmembrane region" description="Helical" evidence="2">
    <location>
        <begin position="38"/>
        <end position="60"/>
    </location>
</feature>
<feature type="transmembrane region" description="Helical" evidence="2">
    <location>
        <begin position="70"/>
        <end position="92"/>
    </location>
</feature>
<keyword id="KW-0050">Antiport</keyword>
<keyword id="KW-1003">Cell membrane</keyword>
<keyword id="KW-0406">Ion transport</keyword>
<keyword id="KW-0472">Membrane</keyword>
<keyword id="KW-0812">Transmembrane</keyword>
<keyword id="KW-1133">Transmembrane helix</keyword>
<keyword id="KW-0813">Transport</keyword>
<comment type="subunit">
    <text evidence="1">May form a heterooligomeric complex that consists of seven subunits: mnhA2, mnhB2, mnhC2, mnhD2, mnhE2, mnhF2 and mnhG2.</text>
</comment>
<comment type="subcellular location">
    <subcellularLocation>
        <location evidence="3">Cell membrane</location>
        <topology evidence="3">Multi-pass membrane protein</topology>
    </subcellularLocation>
</comment>
<comment type="similarity">
    <text evidence="3">Belongs to the CPA3 antiporters (TC 2.A.63) subunit F family.</text>
</comment>
<name>MNHF2_STAA3</name>
<evidence type="ECO:0000250" key="1"/>
<evidence type="ECO:0000255" key="2"/>
<evidence type="ECO:0000305" key="3"/>
<sequence>MIQTITHIMIISSLIIFGIALIICLFRLIKGPTTADRVVTFDTTSAVVMSIVGVLSVLMGTVSFLDSIMLIAIISFVSSVSISRFIGGGHVFNGNNKRNL</sequence>
<organism>
    <name type="scientific">Staphylococcus aureus (strain USA300)</name>
    <dbReference type="NCBI Taxonomy" id="367830"/>
    <lineage>
        <taxon>Bacteria</taxon>
        <taxon>Bacillati</taxon>
        <taxon>Bacillota</taxon>
        <taxon>Bacilli</taxon>
        <taxon>Bacillales</taxon>
        <taxon>Staphylococcaceae</taxon>
        <taxon>Staphylococcus</taxon>
    </lineage>
</organism>
<gene>
    <name type="primary">mnhF2</name>
    <name type="synonym">mrpF2</name>
    <name type="ordered locus">SAUSA300_0615</name>
</gene>
<reference key="1">
    <citation type="journal article" date="2006" name="Lancet">
        <title>Complete genome sequence of USA300, an epidemic clone of community-acquired meticillin-resistant Staphylococcus aureus.</title>
        <authorList>
            <person name="Diep B.A."/>
            <person name="Gill S.R."/>
            <person name="Chang R.F."/>
            <person name="Phan T.H."/>
            <person name="Chen J.H."/>
            <person name="Davidson M.G."/>
            <person name="Lin F."/>
            <person name="Lin J."/>
            <person name="Carleton H.A."/>
            <person name="Mongodin E.F."/>
            <person name="Sensabaugh G.F."/>
            <person name="Perdreau-Remington F."/>
        </authorList>
    </citation>
    <scope>NUCLEOTIDE SEQUENCE [LARGE SCALE GENOMIC DNA]</scope>
    <source>
        <strain>USA300</strain>
    </source>
</reference>
<proteinExistence type="inferred from homology"/>
<dbReference type="EMBL" id="CP000255">
    <property type="protein sequence ID" value="ABD20681.1"/>
    <property type="molecule type" value="Genomic_DNA"/>
</dbReference>
<dbReference type="RefSeq" id="WP_000616642.1">
    <property type="nucleotide sequence ID" value="NZ_CP027476.1"/>
</dbReference>
<dbReference type="SMR" id="Q2FJ10"/>
<dbReference type="KEGG" id="saa:SAUSA300_0615"/>
<dbReference type="HOGENOM" id="CLU_125825_1_3_9"/>
<dbReference type="OMA" id="YERAIYI"/>
<dbReference type="Proteomes" id="UP000001939">
    <property type="component" value="Chromosome"/>
</dbReference>
<dbReference type="GO" id="GO:0005886">
    <property type="term" value="C:plasma membrane"/>
    <property type="evidence" value="ECO:0007669"/>
    <property type="project" value="UniProtKB-SubCell"/>
</dbReference>
<dbReference type="GO" id="GO:0015385">
    <property type="term" value="F:sodium:proton antiporter activity"/>
    <property type="evidence" value="ECO:0007669"/>
    <property type="project" value="TreeGrafter"/>
</dbReference>
<dbReference type="InterPro" id="IPR007208">
    <property type="entry name" value="MrpF/PhaF-like"/>
</dbReference>
<dbReference type="NCBIfam" id="NF009300">
    <property type="entry name" value="PRK12657.1"/>
    <property type="match status" value="1"/>
</dbReference>
<dbReference type="PANTHER" id="PTHR34702">
    <property type="entry name" value="NA(+)/H(+) ANTIPORTER SUBUNIT F1"/>
    <property type="match status" value="1"/>
</dbReference>
<dbReference type="PANTHER" id="PTHR34702:SF1">
    <property type="entry name" value="NA(+)_H(+) ANTIPORTER SUBUNIT F"/>
    <property type="match status" value="1"/>
</dbReference>
<dbReference type="Pfam" id="PF04066">
    <property type="entry name" value="MrpF_PhaF"/>
    <property type="match status" value="1"/>
</dbReference>
<dbReference type="PIRSF" id="PIRSF028784">
    <property type="entry name" value="MrpF"/>
    <property type="match status" value="1"/>
</dbReference>
<protein>
    <recommendedName>
        <fullName>Putative antiporter subunit mnhF2</fullName>
    </recommendedName>
    <alternativeName>
        <fullName>Mrp complex subunit F2</fullName>
    </alternativeName>
    <alternativeName>
        <fullName>Putative NADH-ubiquinone oxidoreductase subunit mnhF2</fullName>
    </alternativeName>
</protein>
<accession>Q2FJ10</accession>